<accession>Q829W7</accession>
<dbReference type="EMBL" id="BA000030">
    <property type="protein sequence ID" value="BAC74003.1"/>
    <property type="status" value="ALT_INIT"/>
    <property type="molecule type" value="Genomic_DNA"/>
</dbReference>
<dbReference type="SMR" id="Q829W7"/>
<dbReference type="KEGG" id="sma:SAVERM_6292"/>
<dbReference type="eggNOG" id="COG1660">
    <property type="taxonomic scope" value="Bacteria"/>
</dbReference>
<dbReference type="HOGENOM" id="CLU_059558_0_0_11"/>
<dbReference type="Proteomes" id="UP000000428">
    <property type="component" value="Chromosome"/>
</dbReference>
<dbReference type="GO" id="GO:0005524">
    <property type="term" value="F:ATP binding"/>
    <property type="evidence" value="ECO:0007669"/>
    <property type="project" value="UniProtKB-UniRule"/>
</dbReference>
<dbReference type="GO" id="GO:0005525">
    <property type="term" value="F:GTP binding"/>
    <property type="evidence" value="ECO:0007669"/>
    <property type="project" value="UniProtKB-UniRule"/>
</dbReference>
<dbReference type="Gene3D" id="3.40.50.300">
    <property type="entry name" value="P-loop containing nucleotide triphosphate hydrolases"/>
    <property type="match status" value="1"/>
</dbReference>
<dbReference type="HAMAP" id="MF_00636">
    <property type="entry name" value="RapZ_like"/>
    <property type="match status" value="1"/>
</dbReference>
<dbReference type="InterPro" id="IPR027417">
    <property type="entry name" value="P-loop_NTPase"/>
</dbReference>
<dbReference type="InterPro" id="IPR005337">
    <property type="entry name" value="RapZ-like"/>
</dbReference>
<dbReference type="InterPro" id="IPR053930">
    <property type="entry name" value="RapZ-like_N"/>
</dbReference>
<dbReference type="InterPro" id="IPR053931">
    <property type="entry name" value="RapZ_C"/>
</dbReference>
<dbReference type="NCBIfam" id="NF003828">
    <property type="entry name" value="PRK05416.1"/>
    <property type="match status" value="1"/>
</dbReference>
<dbReference type="PANTHER" id="PTHR30448">
    <property type="entry name" value="RNASE ADAPTER PROTEIN RAPZ"/>
    <property type="match status" value="1"/>
</dbReference>
<dbReference type="PANTHER" id="PTHR30448:SF0">
    <property type="entry name" value="RNASE ADAPTER PROTEIN RAPZ"/>
    <property type="match status" value="1"/>
</dbReference>
<dbReference type="Pfam" id="PF22740">
    <property type="entry name" value="PapZ_C"/>
    <property type="match status" value="1"/>
</dbReference>
<dbReference type="Pfam" id="PF03668">
    <property type="entry name" value="RapZ-like_N"/>
    <property type="match status" value="1"/>
</dbReference>
<dbReference type="PIRSF" id="PIRSF005052">
    <property type="entry name" value="P-loopkin"/>
    <property type="match status" value="1"/>
</dbReference>
<dbReference type="SUPFAM" id="SSF52540">
    <property type="entry name" value="P-loop containing nucleoside triphosphate hydrolases"/>
    <property type="match status" value="1"/>
</dbReference>
<organism>
    <name type="scientific">Streptomyces avermitilis (strain ATCC 31267 / DSM 46492 / JCM 5070 / NBRC 14893 / NCIMB 12804 / NRRL 8165 / MA-4680)</name>
    <dbReference type="NCBI Taxonomy" id="227882"/>
    <lineage>
        <taxon>Bacteria</taxon>
        <taxon>Bacillati</taxon>
        <taxon>Actinomycetota</taxon>
        <taxon>Actinomycetes</taxon>
        <taxon>Kitasatosporales</taxon>
        <taxon>Streptomycetaceae</taxon>
        <taxon>Streptomyces</taxon>
    </lineage>
</organism>
<sequence length="299" mass="32957">MSTGIETAGVPDAVIPELVIISGMSGAGRSTAAKCLEDLGWFVVDNLPPALIPTMVELGARSQGNVARIAVVVDVRGRRFFDNLRESLADLESKNVTRRIVFLESSDEALVRRFESVRRPHPLQGDGRIVDGIDAERELLRELRGDADLVIDTSSLNVHELRAKMDAQFAGDEEPELRATVMSFGFKYGLPVDADLVVDMRFLPNPHWVPELRPFTGLNEEVSAYVFNQPGAKEFLDRYAELLRLIAAGYRREGKRYVTIAVGCTGGKHRSVATSEKLAARLAAEGVETVVVHRDMGRE</sequence>
<gene>
    <name type="ordered locus">SAV_6292</name>
</gene>
<proteinExistence type="inferred from homology"/>
<evidence type="ECO:0000255" key="1">
    <source>
        <dbReference type="HAMAP-Rule" id="MF_00636"/>
    </source>
</evidence>
<evidence type="ECO:0000305" key="2"/>
<reference key="1">
    <citation type="journal article" date="2001" name="Proc. Natl. Acad. Sci. U.S.A.">
        <title>Genome sequence of an industrial microorganism Streptomyces avermitilis: deducing the ability of producing secondary metabolites.</title>
        <authorList>
            <person name="Omura S."/>
            <person name="Ikeda H."/>
            <person name="Ishikawa J."/>
            <person name="Hanamoto A."/>
            <person name="Takahashi C."/>
            <person name="Shinose M."/>
            <person name="Takahashi Y."/>
            <person name="Horikawa H."/>
            <person name="Nakazawa H."/>
            <person name="Osonoe T."/>
            <person name="Kikuchi H."/>
            <person name="Shiba T."/>
            <person name="Sakaki Y."/>
            <person name="Hattori M."/>
        </authorList>
    </citation>
    <scope>NUCLEOTIDE SEQUENCE [LARGE SCALE GENOMIC DNA]</scope>
    <source>
        <strain>ATCC 31267 / DSM 46492 / JCM 5070 / NBRC 14893 / NCIMB 12804 / NRRL 8165 / MA-4680</strain>
    </source>
</reference>
<reference key="2">
    <citation type="journal article" date="2003" name="Nat. Biotechnol.">
        <title>Complete genome sequence and comparative analysis of the industrial microorganism Streptomyces avermitilis.</title>
        <authorList>
            <person name="Ikeda H."/>
            <person name="Ishikawa J."/>
            <person name="Hanamoto A."/>
            <person name="Shinose M."/>
            <person name="Kikuchi H."/>
            <person name="Shiba T."/>
            <person name="Sakaki Y."/>
            <person name="Hattori M."/>
            <person name="Omura S."/>
        </authorList>
    </citation>
    <scope>NUCLEOTIDE SEQUENCE [LARGE SCALE GENOMIC DNA]</scope>
    <source>
        <strain>ATCC 31267 / DSM 46492 / JCM 5070 / NBRC 14893 / NCIMB 12804 / NRRL 8165 / MA-4680</strain>
    </source>
</reference>
<keyword id="KW-0067">ATP-binding</keyword>
<keyword id="KW-0342">GTP-binding</keyword>
<keyword id="KW-0547">Nucleotide-binding</keyword>
<keyword id="KW-1185">Reference proteome</keyword>
<protein>
    <recommendedName>
        <fullName evidence="1">Nucleotide-binding protein SAV_6292</fullName>
    </recommendedName>
</protein>
<comment type="function">
    <text evidence="1">Displays ATPase and GTPase activities.</text>
</comment>
<comment type="similarity">
    <text evidence="1">Belongs to the RapZ-like family.</text>
</comment>
<comment type="sequence caution" evidence="2">
    <conflict type="erroneous initiation">
        <sequence resource="EMBL-CDS" id="BAC74003"/>
    </conflict>
</comment>
<name>Y6292_STRAW</name>
<feature type="chain" id="PRO_0000107767" description="Nucleotide-binding protein SAV_6292">
    <location>
        <begin position="1"/>
        <end position="299"/>
    </location>
</feature>
<feature type="binding site" evidence="1">
    <location>
        <begin position="23"/>
        <end position="30"/>
    </location>
    <ligand>
        <name>ATP</name>
        <dbReference type="ChEBI" id="CHEBI:30616"/>
    </ligand>
</feature>
<feature type="binding site" evidence="1">
    <location>
        <begin position="74"/>
        <end position="77"/>
    </location>
    <ligand>
        <name>GTP</name>
        <dbReference type="ChEBI" id="CHEBI:37565"/>
    </ligand>
</feature>